<sequence>MPKLKTRKAAAKRFKATGTGKFMRRRAFHNHLLDHKTPKQKRHLKTKAVVDRTDEERVTLMMPYA</sequence>
<reference key="1">
    <citation type="journal article" date="2006" name="Proc. Natl. Acad. Sci. U.S.A.">
        <title>Genome sequence of Synechococcus CC9311: insights into adaptation to a coastal environment.</title>
        <authorList>
            <person name="Palenik B."/>
            <person name="Ren Q."/>
            <person name="Dupont C.L."/>
            <person name="Myers G.S."/>
            <person name="Heidelberg J.F."/>
            <person name="Badger J.H."/>
            <person name="Madupu R."/>
            <person name="Nelson W.C."/>
            <person name="Brinkac L.M."/>
            <person name="Dodson R.J."/>
            <person name="Durkin A.S."/>
            <person name="Daugherty S.C."/>
            <person name="Sullivan S.A."/>
            <person name="Khouri H."/>
            <person name="Mohamoud Y."/>
            <person name="Halpin R."/>
            <person name="Paulsen I.T."/>
        </authorList>
    </citation>
    <scope>NUCLEOTIDE SEQUENCE [LARGE SCALE GENOMIC DNA]</scope>
    <source>
        <strain>CC9311</strain>
    </source>
</reference>
<gene>
    <name evidence="1" type="primary">rpmI</name>
    <name evidence="1" type="synonym">rpl35</name>
    <name type="ordered locus">sync_0059</name>
</gene>
<feature type="chain" id="PRO_1000050783" description="Large ribosomal subunit protein bL35">
    <location>
        <begin position="1"/>
        <end position="65"/>
    </location>
</feature>
<accession>Q0IE25</accession>
<organism>
    <name type="scientific">Synechococcus sp. (strain CC9311)</name>
    <dbReference type="NCBI Taxonomy" id="64471"/>
    <lineage>
        <taxon>Bacteria</taxon>
        <taxon>Bacillati</taxon>
        <taxon>Cyanobacteriota</taxon>
        <taxon>Cyanophyceae</taxon>
        <taxon>Synechococcales</taxon>
        <taxon>Synechococcaceae</taxon>
        <taxon>Synechococcus</taxon>
    </lineage>
</organism>
<protein>
    <recommendedName>
        <fullName evidence="1">Large ribosomal subunit protein bL35</fullName>
    </recommendedName>
    <alternativeName>
        <fullName evidence="2">50S ribosomal protein L35</fullName>
    </alternativeName>
</protein>
<keyword id="KW-1185">Reference proteome</keyword>
<keyword id="KW-0687">Ribonucleoprotein</keyword>
<keyword id="KW-0689">Ribosomal protein</keyword>
<evidence type="ECO:0000255" key="1">
    <source>
        <dbReference type="HAMAP-Rule" id="MF_00514"/>
    </source>
</evidence>
<evidence type="ECO:0000305" key="2"/>
<proteinExistence type="inferred from homology"/>
<name>RL35_SYNS3</name>
<comment type="similarity">
    <text evidence="1">Belongs to the bacterial ribosomal protein bL35 family.</text>
</comment>
<dbReference type="EMBL" id="CP000435">
    <property type="protein sequence ID" value="ABI47147.1"/>
    <property type="molecule type" value="Genomic_DNA"/>
</dbReference>
<dbReference type="RefSeq" id="WP_011618048.1">
    <property type="nucleotide sequence ID" value="NC_008319.1"/>
</dbReference>
<dbReference type="SMR" id="Q0IE25"/>
<dbReference type="STRING" id="64471.sync_0059"/>
<dbReference type="KEGG" id="syg:sync_0059"/>
<dbReference type="eggNOG" id="COG0291">
    <property type="taxonomic scope" value="Bacteria"/>
</dbReference>
<dbReference type="HOGENOM" id="CLU_169643_4_0_3"/>
<dbReference type="OrthoDB" id="47476at2"/>
<dbReference type="Proteomes" id="UP000001961">
    <property type="component" value="Chromosome"/>
</dbReference>
<dbReference type="GO" id="GO:0022625">
    <property type="term" value="C:cytosolic large ribosomal subunit"/>
    <property type="evidence" value="ECO:0007669"/>
    <property type="project" value="TreeGrafter"/>
</dbReference>
<dbReference type="GO" id="GO:0003735">
    <property type="term" value="F:structural constituent of ribosome"/>
    <property type="evidence" value="ECO:0007669"/>
    <property type="project" value="InterPro"/>
</dbReference>
<dbReference type="GO" id="GO:0006412">
    <property type="term" value="P:translation"/>
    <property type="evidence" value="ECO:0007669"/>
    <property type="project" value="UniProtKB-UniRule"/>
</dbReference>
<dbReference type="FunFam" id="4.10.410.60:FF:000001">
    <property type="entry name" value="50S ribosomal protein L35"/>
    <property type="match status" value="1"/>
</dbReference>
<dbReference type="Gene3D" id="4.10.410.60">
    <property type="match status" value="1"/>
</dbReference>
<dbReference type="HAMAP" id="MF_00514">
    <property type="entry name" value="Ribosomal_bL35"/>
    <property type="match status" value="1"/>
</dbReference>
<dbReference type="InterPro" id="IPR001706">
    <property type="entry name" value="Ribosomal_bL35"/>
</dbReference>
<dbReference type="InterPro" id="IPR021137">
    <property type="entry name" value="Ribosomal_bL35-like"/>
</dbReference>
<dbReference type="InterPro" id="IPR018265">
    <property type="entry name" value="Ribosomal_bL35_CS"/>
</dbReference>
<dbReference type="InterPro" id="IPR037229">
    <property type="entry name" value="Ribosomal_bL35_sf"/>
</dbReference>
<dbReference type="NCBIfam" id="TIGR00001">
    <property type="entry name" value="rpmI_bact"/>
    <property type="match status" value="1"/>
</dbReference>
<dbReference type="PANTHER" id="PTHR33343">
    <property type="entry name" value="54S RIBOSOMAL PROTEIN BL35M"/>
    <property type="match status" value="1"/>
</dbReference>
<dbReference type="PANTHER" id="PTHR33343:SF1">
    <property type="entry name" value="LARGE RIBOSOMAL SUBUNIT PROTEIN BL35M"/>
    <property type="match status" value="1"/>
</dbReference>
<dbReference type="Pfam" id="PF01632">
    <property type="entry name" value="Ribosomal_L35p"/>
    <property type="match status" value="1"/>
</dbReference>
<dbReference type="PRINTS" id="PR00064">
    <property type="entry name" value="RIBOSOMALL35"/>
</dbReference>
<dbReference type="SUPFAM" id="SSF143034">
    <property type="entry name" value="L35p-like"/>
    <property type="match status" value="1"/>
</dbReference>
<dbReference type="PROSITE" id="PS00936">
    <property type="entry name" value="RIBOSOMAL_L35"/>
    <property type="match status" value="1"/>
</dbReference>